<feature type="chain" id="PRO_0000449402" description="Orsellinic acid synthase ArmB">
    <location>
        <begin position="1"/>
        <end position="2210"/>
    </location>
</feature>
<feature type="domain" description="Ketosynthase family 3 (KS3)" evidence="6">
    <location>
        <begin position="391"/>
        <end position="817"/>
    </location>
</feature>
<feature type="domain" description="PKS/mFAS DH" evidence="7">
    <location>
        <begin position="1307"/>
        <end position="1614"/>
    </location>
</feature>
<feature type="domain" description="Carrier 1" evidence="5">
    <location>
        <begin position="1660"/>
        <end position="1735"/>
    </location>
</feature>
<feature type="domain" description="Carrier 2" evidence="5">
    <location>
        <begin position="1845"/>
        <end position="1922"/>
    </location>
</feature>
<feature type="region of interest" description="N-terminal acylcarrier protein transacylase domain (SAT)" evidence="4">
    <location>
        <begin position="38"/>
        <end position="261"/>
    </location>
</feature>
<feature type="region of interest" description="Malonyl-CoA:ACP transacylase (MAT) domain" evidence="4">
    <location>
        <begin position="915"/>
        <end position="1240"/>
    </location>
</feature>
<feature type="region of interest" description="N-terminal hotdog fold" evidence="7">
    <location>
        <begin position="1307"/>
        <end position="1437"/>
    </location>
</feature>
<feature type="region of interest" description="Product template (PT) domain" evidence="4">
    <location>
        <begin position="1336"/>
        <end position="1611"/>
    </location>
</feature>
<feature type="region of interest" description="C-terminal hotdog fold" evidence="7">
    <location>
        <begin position="1464"/>
        <end position="1614"/>
    </location>
</feature>
<feature type="region of interest" description="Disordered" evidence="8">
    <location>
        <begin position="1739"/>
        <end position="1761"/>
    </location>
</feature>
<feature type="region of interest" description="Disordered" evidence="8">
    <location>
        <begin position="1920"/>
        <end position="1946"/>
    </location>
</feature>
<feature type="region of interest" description="Thioesterase (TE) domain" evidence="4">
    <location>
        <begin position="1963"/>
        <end position="2202"/>
    </location>
</feature>
<feature type="compositionally biased region" description="Acidic residues" evidence="8">
    <location>
        <begin position="1933"/>
        <end position="1944"/>
    </location>
</feature>
<feature type="active site" description="For beta-ketoacyl synthase activity" evidence="6">
    <location>
        <position position="561"/>
    </location>
</feature>
<feature type="active site" description="For beta-ketoacyl synthase activity" evidence="6">
    <location>
        <position position="696"/>
    </location>
</feature>
<feature type="active site" description="For beta-ketoacyl synthase activity" evidence="6">
    <location>
        <position position="736"/>
    </location>
</feature>
<feature type="active site" description="For acyl/malonyl transferase activity" evidence="2">
    <location>
        <position position="1009"/>
    </location>
</feature>
<feature type="active site" description="Proton acceptor; for dehydratase activity" evidence="7">
    <location>
        <position position="1339"/>
    </location>
</feature>
<feature type="active site" description="Proton donor; for dehydratase activity" evidence="7">
    <location>
        <position position="1525"/>
    </location>
</feature>
<feature type="modified residue" description="O-(pantetheine 4'-phosphoryl)serine" evidence="5">
    <location>
        <position position="1694"/>
    </location>
</feature>
<feature type="modified residue" description="O-(pantetheine 4'-phosphoryl)serine" evidence="5">
    <location>
        <position position="1882"/>
    </location>
</feature>
<sequence length="2210" mass="237469">MSPSLVVPVFAGHGTTAINSTSLRERAAADASSPSGALLLDACHYAFNVELSTLSPSEALAVGINPDHFTDPKSLLLLPSHEHYLTNSVVTAATLFLVQTLRYLASVQASSSTSFASSLQTNSEHGLGIVGFSSGILPACVAGSSATTLEFISNAVETFRLAFWIGVRLQIHKASVQTPELLGESPLPWSLAFLGMSHAAAESAIQSFLKSFEGTPELRVTSVVSETSVTISGRPDILAAFAAQLPLSGPVHKTTVDALYHSSSHHDGVRSQVLADVIRRNIRFPTHADIKVPVRSTYSGELLSKGSEGSASFVEQVVDMILTQPVNWDKVTEALVRATPEGTVVHLLNFGPGAGLTKGIERYFPSNKVSSTDLSSEPVHTSTLQMPSSVQEPIAICGMSVNMPGAPSVAKLWEVLEKGINTVSEVPEHRFKVSDYNDPKKKGRTMGAHTGNFIDEPDAFDNKFFNISPREARSMDPQQRVLLHTAYEALEDAGYVPNSTPTNNPETFGCYVGVATNDYVQNLRNDIDVYYSTGTLRAFLSGRISYALQFSGPSIVVDTACSSSLIAVYQACRALMNRDCNAAVAGGVNVISSPDMFLGLDRGHFLSPTGQCKAFDASADGYSRSEGCGIFVLKRLSDAVTENDQILGVIRGVEVNQSGNAYSITRPHAPTQENLFTQALERSGLDASRISVVEAHGTGTQAGDPIELESIRGIFAKHRKANNPLHITSVKANIGHLEAASGAAALAKLLLMLRHRTIPRLVSLKNLNPRIKPLASDNVIIDTKQVAWTVPDESLPRVALLNNFGAAGSNGALLLEEYIPKSSGKDTDVASTFIVGLSAKNEQVLVDLRASYIEYLRSPASAGVTLADIAYTATARRRIFSHRFAVTARSKEELTHKLELASGKTVSDNAPGKVVFVFSGQGGQYLGMGSALYKTSALFKNAIDECEYFLKKNNFPGVLPIITSDGESSGLTPVEEFEANQAAIFALEYGLAKLWMSWGVTPTAVVGHSLGEYAAHVITGVLSLESALTLVAHRVRIMMRTCELDTTGMIAINLGSGAVTDILSSSPDFSGISIACYNSATDCVASGPIGQLDALKAHLDKAVHCKSVRLKVPFGYHSSAMQPLLEEFGALAKRVTVHAPKIPVISNPLGRVIREGDKSTFNAEYYLSHCADPVQFESGISALIDDASFADIAAWIELGPHPTTLPMLTVHRGVSKEALLVGSLKKRQDDGLTLSSSLSQLYTSNVPVRWRDVFADVSAACVSLPSYPWQKSKFWVAWKEDSPAPASSTEGSPASTKAFNPVNDFGMLQSWAQFPSAANSQIAIFETPISLLKTSITGHIVGDVPLCPASVYHELALAGIEASKAHLSLPLQGSHSALFNIDYVKPLVYSKDVARVIKTTIAMNTDGSGSFTVESYADSEAESVHCSGQFRPLLVVDTTTKFNRMAPVVSRRTAAICSGEDGEAEVFTTRTAYEIIFTRVVRYAKEYHTMKNVTISKNGMEGYAVVKLPKDHDKSKFVVHPVFMDTMLHVAGFLANMQGGDNDAYICSKVKSVKAVPSLINNDATYGVFVVNAWVESEGMMLSDAIAVDISGHGQIVAQLKGMCFKKLRLNTLQRSLAMHAGHTAPAPAQKRSVAAAPKPKITEVAPALEPRSSPAKRSVDVQNTVLNIVGDTCGIEISALDVNADLETYGVDSLMSIEILRKFEESFPQMQFDATIFSTCNNITELVREISSTVGSQAATAVNTPETASTPEPTLQGDASQSTDVRSILLELISSFTGFEISNFDLNADADTAYGLDKFLFIPLFSKLQTFFPDITLDPTKPSVCSTIGELLDEVTAQVQAGPSSPSSDLVDTKPMFVSVLGLDESDIQDDTEFETIGLDSLTAIEALHAIQTEYGLELPSNLFELHTTAKAVNQYISSKRPGKSPKQVEETAMDPDREEDLSDLTPEQVQSVVRVLRLDEVPMSVQKSSSSGSPLFLFHDGSGAVNYLRRLGSVDREFWGFNNPNYATGKPWGSVEAMASAYADYAVKVAGSRPVIFGGWSFGGVVGFEAARQLMRRGVPVKGVVLIDSPFPVDHVPSSNEFMAVTAGAFTRGGRTPIGRMMWKQLQQNAPLLKTYDPRIAGGPYPPLVLLHNKEGIPPDAFLPYPVPRWMSEKGTDPCLLADDWSGLVGAPIKVIHLPGTHFTTFATPHLGAVTQALVDGCAYLDGL</sequence>
<reference key="1">
    <citation type="journal article" date="2017" name="Nat. Ecol. Evol.">
        <title>Genome expansion and lineage-specific genetic innovations in the forest pathogenic fungi Armillaria.</title>
        <authorList>
            <person name="Sipos G."/>
            <person name="Prasanna A.N."/>
            <person name="Walter M.C."/>
            <person name="O'Connor E."/>
            <person name="Balint B."/>
            <person name="Krizsan K."/>
            <person name="Kiss B."/>
            <person name="Hess J."/>
            <person name="Varga T."/>
            <person name="Slot J."/>
            <person name="Riley R."/>
            <person name="Boka B."/>
            <person name="Rigling D."/>
            <person name="Barry K."/>
            <person name="Lee J."/>
            <person name="Mihaltcheva S."/>
            <person name="LaButti K."/>
            <person name="Lipzen A."/>
            <person name="Waldron R."/>
            <person name="Moloney N.M."/>
            <person name="Sperisen C."/>
            <person name="Kredics L."/>
            <person name="Vagvoelgyi C."/>
            <person name="Patrignani A."/>
            <person name="Fitzpatrick D."/>
            <person name="Nagy I."/>
            <person name="Doyle S."/>
            <person name="Anderson J.B."/>
            <person name="Grigoriev I.V."/>
            <person name="Gueldener U."/>
            <person name="Muensterkoetter M."/>
            <person name="Nagy L.G."/>
        </authorList>
    </citation>
    <scope>NUCLEOTIDE SEQUENCE [LARGE SCALE GENOMIC DNA]</scope>
    <source>
        <strain>C18/9</strain>
    </source>
</reference>
<reference key="2">
    <citation type="journal article" date="2011" name="Bioorg. Med. Chem. Lett.">
        <title>In vitro cytotoxicity of melleolide antibiotics: structural and mechanistic aspects.</title>
        <authorList>
            <person name="Bohnert M."/>
            <person name="Miethbauer S."/>
            <person name="Dahse H.M."/>
            <person name="Ziemen J."/>
            <person name="Nett M."/>
            <person name="Hoffmeister D."/>
        </authorList>
    </citation>
    <scope>BIOTECHNOLOGY</scope>
</reference>
<reference key="3">
    <citation type="journal article" date="2013" name="Evid. Based Complement Alternat. Med.">
        <title>Therapeutic and radiosensitizing effects of armillaridin on human esophageal cancer cells.</title>
        <authorList>
            <person name="Chi C.W."/>
            <person name="Chen C.C."/>
            <person name="Chen Y.J."/>
        </authorList>
    </citation>
    <scope>BIOTECHNOLOGY</scope>
</reference>
<reference key="4">
    <citation type="journal article" date="2015" name="Int. J. Med. Mushrooms">
        <title>Armillaridin, a honey medicinal mushroom, Armillaria mellea (higher basidiomycetes) component, inhibits differentiation and activation of human macrophages.</title>
        <authorList>
            <person name="Liu T.P."/>
            <person name="Chen C.C."/>
            <person name="Shiao P.Y."/>
            <person name="Shieh H.R."/>
            <person name="Chen Y.Y."/>
            <person name="Chen Y.J."/>
        </authorList>
    </citation>
    <scope>BIOTECHNOLOGY</scope>
</reference>
<reference key="5">
    <citation type="journal article" date="2016" name="J. Ethnopharmacol.">
        <title>Structure, cytotoxic activity and mechanism of protoilludane sesquiterpene aryl esters from the mycelium of Armillaria mellea.</title>
        <authorList>
            <person name="Li Z."/>
            <person name="Wang Y."/>
            <person name="Jiang B."/>
            <person name="Li W."/>
            <person name="Zheng L."/>
            <person name="Yang X."/>
            <person name="Bao Y."/>
            <person name="Sun L."/>
            <person name="Huang Y."/>
            <person name="Li Y."/>
        </authorList>
    </citation>
    <scope>BIOTECHNOLOGY</scope>
</reference>
<reference key="6">
    <citation type="journal article" date="2016" name="Tumor Biol.">
        <title>Armillaridin induces autophagy-associated cell death in human chronic myelogenous leukemia K562 cells.</title>
        <authorList>
            <person name="Chang W.H."/>
            <person name="Huang H.L."/>
            <person name="Huang W.P."/>
            <person name="Chen C.C."/>
            <person name="Chen Y.J."/>
        </authorList>
    </citation>
    <scope>BIOTECHNOLOGY</scope>
</reference>
<reference key="7">
    <citation type="journal article" date="2018" name="Curr. Biol.">
        <title>Armillaria.</title>
        <authorList>
            <person name="Sipos G."/>
            <person name="Anderson J.B."/>
            <person name="Nagy L.G."/>
        </authorList>
    </citation>
    <scope>MISCELLANEOUS</scope>
</reference>
<reference key="8">
    <citation type="journal article" date="2019" name="Am. J. Chin. Med.">
        <title>Induction of autophagic death of human hepatocellular carcinoma cells by armillaridin from Armillaria mellea.</title>
        <authorList>
            <person name="Leu Y.S."/>
            <person name="Chen Y.J."/>
            <person name="Chen C.C."/>
            <person name="Huang H.L."/>
        </authorList>
    </citation>
    <scope>BIOTECHNOLOGY</scope>
</reference>
<reference key="9">
    <citation type="journal article" date="2020" name="Plant Dis.">
        <title>Susceptibility of garden trees and shrubs to Armillaria root rot.</title>
        <authorList>
            <person name="Cromey M.G."/>
            <person name="Drakulic J."/>
            <person name="Beal E.J."/>
            <person name="Waghorn I.A.G."/>
            <person name="Perry J.N."/>
            <person name="Clover G.R.G."/>
        </authorList>
    </citation>
    <scope>MISCELLANEOUS</scope>
</reference>
<name>ARMB_ARMOS</name>
<evidence type="ECO:0000250" key="1">
    <source>
        <dbReference type="UniProtKB" id="I3ZNU9"/>
    </source>
</evidence>
<evidence type="ECO:0000250" key="2">
    <source>
        <dbReference type="UniProtKB" id="J4UHQ6"/>
    </source>
</evidence>
<evidence type="ECO:0000250" key="3">
    <source>
        <dbReference type="UniProtKB" id="P0DL13"/>
    </source>
</evidence>
<evidence type="ECO:0000255" key="4"/>
<evidence type="ECO:0000255" key="5">
    <source>
        <dbReference type="PROSITE-ProRule" id="PRU00258"/>
    </source>
</evidence>
<evidence type="ECO:0000255" key="6">
    <source>
        <dbReference type="PROSITE-ProRule" id="PRU01348"/>
    </source>
</evidence>
<evidence type="ECO:0000255" key="7">
    <source>
        <dbReference type="PROSITE-ProRule" id="PRU01363"/>
    </source>
</evidence>
<evidence type="ECO:0000256" key="8">
    <source>
        <dbReference type="SAM" id="MobiDB-lite"/>
    </source>
</evidence>
<evidence type="ECO:0000269" key="9">
    <source>
    </source>
</evidence>
<evidence type="ECO:0000269" key="10">
    <source>
    </source>
</evidence>
<evidence type="ECO:0000269" key="11">
    <source>
    </source>
</evidence>
<evidence type="ECO:0000269" key="12">
    <source>
    </source>
</evidence>
<evidence type="ECO:0000269" key="13">
    <source>
    </source>
</evidence>
<evidence type="ECO:0000269" key="14">
    <source>
    </source>
</evidence>
<evidence type="ECO:0000269" key="15">
    <source>
    </source>
</evidence>
<evidence type="ECO:0000305" key="16"/>
<evidence type="ECO:0000305" key="17">
    <source>
    </source>
</evidence>
<organism>
    <name type="scientific">Armillaria ostoyae</name>
    <name type="common">Armillaria root rot fungus</name>
    <dbReference type="NCBI Taxonomy" id="47428"/>
    <lineage>
        <taxon>Eukaryota</taxon>
        <taxon>Fungi</taxon>
        <taxon>Dikarya</taxon>
        <taxon>Basidiomycota</taxon>
        <taxon>Agaricomycotina</taxon>
        <taxon>Agaricomycetes</taxon>
        <taxon>Agaricomycetidae</taxon>
        <taxon>Agaricales</taxon>
        <taxon>Marasmiineae</taxon>
        <taxon>Physalacriaceae</taxon>
        <taxon>Armillaria</taxon>
    </lineage>
</organism>
<protein>
    <recommendedName>
        <fullName evidence="1">Orsellinic acid synthase ArmB</fullName>
        <shortName evidence="1">OAS</shortName>
        <ecNumber evidence="1">2.3.1.-</ecNumber>
    </recommendedName>
    <alternativeName>
        <fullName evidence="1">Melledonol synthase</fullName>
    </alternativeName>
    <alternativeName>
        <fullName evidence="1">Melleolides biosynthesis cluster protein armB</fullName>
    </alternativeName>
    <alternativeName>
        <fullName evidence="1">Non-reducing polyketide synthase ArmB</fullName>
    </alternativeName>
</protein>
<dbReference type="EC" id="2.3.1.-" evidence="1"/>
<dbReference type="EMBL" id="FUEG01000007">
    <property type="protein sequence ID" value="SJL07001.1"/>
    <property type="molecule type" value="Genomic_DNA"/>
</dbReference>
<dbReference type="SMR" id="A0A284RE13"/>
<dbReference type="STRING" id="47428.A0A284RE13"/>
<dbReference type="ESTHER" id="armos-armb">
    <property type="family name" value="Thioesterase"/>
</dbReference>
<dbReference type="OMA" id="LNTHYDP"/>
<dbReference type="OrthoDB" id="329835at2759"/>
<dbReference type="Proteomes" id="UP000219338">
    <property type="component" value="Unassembled WGS sequence"/>
</dbReference>
<dbReference type="GO" id="GO:0004315">
    <property type="term" value="F:3-oxoacyl-[acyl-carrier-protein] synthase activity"/>
    <property type="evidence" value="ECO:0007669"/>
    <property type="project" value="InterPro"/>
</dbReference>
<dbReference type="GO" id="GO:0004312">
    <property type="term" value="F:fatty acid synthase activity"/>
    <property type="evidence" value="ECO:0007669"/>
    <property type="project" value="TreeGrafter"/>
</dbReference>
<dbReference type="GO" id="GO:0031177">
    <property type="term" value="F:phosphopantetheine binding"/>
    <property type="evidence" value="ECO:0007669"/>
    <property type="project" value="InterPro"/>
</dbReference>
<dbReference type="GO" id="GO:0006633">
    <property type="term" value="P:fatty acid biosynthetic process"/>
    <property type="evidence" value="ECO:0007669"/>
    <property type="project" value="InterPro"/>
</dbReference>
<dbReference type="GO" id="GO:0046189">
    <property type="term" value="P:phenol-containing compound biosynthetic process"/>
    <property type="evidence" value="ECO:0007669"/>
    <property type="project" value="UniProtKB-ARBA"/>
</dbReference>
<dbReference type="GO" id="GO:0030639">
    <property type="term" value="P:polyketide biosynthetic process"/>
    <property type="evidence" value="ECO:0007669"/>
    <property type="project" value="UniProtKB-ARBA"/>
</dbReference>
<dbReference type="GO" id="GO:0009403">
    <property type="term" value="P:toxin biosynthetic process"/>
    <property type="evidence" value="ECO:0007669"/>
    <property type="project" value="UniProtKB-ARBA"/>
</dbReference>
<dbReference type="CDD" id="cd00833">
    <property type="entry name" value="PKS"/>
    <property type="match status" value="1"/>
</dbReference>
<dbReference type="Gene3D" id="3.30.70.3290">
    <property type="match status" value="1"/>
</dbReference>
<dbReference type="Gene3D" id="3.40.47.10">
    <property type="match status" value="1"/>
</dbReference>
<dbReference type="Gene3D" id="1.10.1200.10">
    <property type="entry name" value="ACP-like"/>
    <property type="match status" value="2"/>
</dbReference>
<dbReference type="Gene3D" id="3.40.50.1820">
    <property type="entry name" value="alpha/beta hydrolase"/>
    <property type="match status" value="1"/>
</dbReference>
<dbReference type="Gene3D" id="3.40.366.10">
    <property type="entry name" value="Malonyl-Coenzyme A Acyl Carrier Protein, domain 2"/>
    <property type="match status" value="3"/>
</dbReference>
<dbReference type="Gene3D" id="3.10.129.110">
    <property type="entry name" value="Polyketide synthase dehydratase"/>
    <property type="match status" value="1"/>
</dbReference>
<dbReference type="InterPro" id="IPR029058">
    <property type="entry name" value="AB_hydrolase_fold"/>
</dbReference>
<dbReference type="InterPro" id="IPR001227">
    <property type="entry name" value="Ac_transferase_dom_sf"/>
</dbReference>
<dbReference type="InterPro" id="IPR036736">
    <property type="entry name" value="ACP-like_sf"/>
</dbReference>
<dbReference type="InterPro" id="IPR014043">
    <property type="entry name" value="Acyl_transferase_dom"/>
</dbReference>
<dbReference type="InterPro" id="IPR016035">
    <property type="entry name" value="Acyl_Trfase/lysoPLipase"/>
</dbReference>
<dbReference type="InterPro" id="IPR018201">
    <property type="entry name" value="Ketoacyl_synth_AS"/>
</dbReference>
<dbReference type="InterPro" id="IPR014031">
    <property type="entry name" value="Ketoacyl_synth_C"/>
</dbReference>
<dbReference type="InterPro" id="IPR014030">
    <property type="entry name" value="Ketoacyl_synth_N"/>
</dbReference>
<dbReference type="InterPro" id="IPR016036">
    <property type="entry name" value="Malonyl_transacylase_ACP-bd"/>
</dbReference>
<dbReference type="InterPro" id="IPR020841">
    <property type="entry name" value="PKS_Beta-ketoAc_synthase_dom"/>
</dbReference>
<dbReference type="InterPro" id="IPR042104">
    <property type="entry name" value="PKS_dehydratase_sf"/>
</dbReference>
<dbReference type="InterPro" id="IPR049551">
    <property type="entry name" value="PKS_DH_C"/>
</dbReference>
<dbReference type="InterPro" id="IPR049900">
    <property type="entry name" value="PKS_mFAS_DH"/>
</dbReference>
<dbReference type="InterPro" id="IPR050091">
    <property type="entry name" value="PKS_NRPS_Biosynth_Enz"/>
</dbReference>
<dbReference type="InterPro" id="IPR020806">
    <property type="entry name" value="PKS_PP-bd"/>
</dbReference>
<dbReference type="InterPro" id="IPR020802">
    <property type="entry name" value="PKS_thioesterase"/>
</dbReference>
<dbReference type="InterPro" id="IPR009081">
    <property type="entry name" value="PP-bd_ACP"/>
</dbReference>
<dbReference type="InterPro" id="IPR006162">
    <property type="entry name" value="Ppantetheine_attach_site"/>
</dbReference>
<dbReference type="InterPro" id="IPR030918">
    <property type="entry name" value="PT_fungal_PKS"/>
</dbReference>
<dbReference type="InterPro" id="IPR032088">
    <property type="entry name" value="SAT"/>
</dbReference>
<dbReference type="InterPro" id="IPR001031">
    <property type="entry name" value="Thioesterase"/>
</dbReference>
<dbReference type="InterPro" id="IPR016039">
    <property type="entry name" value="Thiolase-like"/>
</dbReference>
<dbReference type="NCBIfam" id="TIGR04532">
    <property type="entry name" value="PT_fungal_PKS"/>
    <property type="match status" value="1"/>
</dbReference>
<dbReference type="PANTHER" id="PTHR43775">
    <property type="entry name" value="FATTY ACID SYNTHASE"/>
    <property type="match status" value="1"/>
</dbReference>
<dbReference type="PANTHER" id="PTHR43775:SF37">
    <property type="entry name" value="SI:DKEY-61P9.11"/>
    <property type="match status" value="1"/>
</dbReference>
<dbReference type="Pfam" id="PF00698">
    <property type="entry name" value="Acyl_transf_1"/>
    <property type="match status" value="1"/>
</dbReference>
<dbReference type="Pfam" id="PF22621">
    <property type="entry name" value="CurL-like_PKS_C"/>
    <property type="match status" value="1"/>
</dbReference>
<dbReference type="Pfam" id="PF00109">
    <property type="entry name" value="ketoacyl-synt"/>
    <property type="match status" value="1"/>
</dbReference>
<dbReference type="Pfam" id="PF02801">
    <property type="entry name" value="Ketoacyl-synt_C"/>
    <property type="match status" value="1"/>
</dbReference>
<dbReference type="Pfam" id="PF00550">
    <property type="entry name" value="PP-binding"/>
    <property type="match status" value="2"/>
</dbReference>
<dbReference type="Pfam" id="PF14765">
    <property type="entry name" value="PS-DH"/>
    <property type="match status" value="1"/>
</dbReference>
<dbReference type="Pfam" id="PF16073">
    <property type="entry name" value="SAT"/>
    <property type="match status" value="1"/>
</dbReference>
<dbReference type="Pfam" id="PF00975">
    <property type="entry name" value="Thioesterase"/>
    <property type="match status" value="1"/>
</dbReference>
<dbReference type="SMART" id="SM00827">
    <property type="entry name" value="PKS_AT"/>
    <property type="match status" value="1"/>
</dbReference>
<dbReference type="SMART" id="SM00825">
    <property type="entry name" value="PKS_KS"/>
    <property type="match status" value="1"/>
</dbReference>
<dbReference type="SMART" id="SM00823">
    <property type="entry name" value="PKS_PP"/>
    <property type="match status" value="2"/>
</dbReference>
<dbReference type="SMART" id="SM01294">
    <property type="entry name" value="PKS_PP_betabranch"/>
    <property type="match status" value="1"/>
</dbReference>
<dbReference type="SMART" id="SM00824">
    <property type="entry name" value="PKS_TE"/>
    <property type="match status" value="1"/>
</dbReference>
<dbReference type="SUPFAM" id="SSF47336">
    <property type="entry name" value="ACP-like"/>
    <property type="match status" value="2"/>
</dbReference>
<dbReference type="SUPFAM" id="SSF53474">
    <property type="entry name" value="alpha/beta-Hydrolases"/>
    <property type="match status" value="1"/>
</dbReference>
<dbReference type="SUPFAM" id="SSF52151">
    <property type="entry name" value="FabD/lysophospholipase-like"/>
    <property type="match status" value="2"/>
</dbReference>
<dbReference type="SUPFAM" id="SSF55048">
    <property type="entry name" value="Probable ACP-binding domain of malonyl-CoA ACP transacylase"/>
    <property type="match status" value="1"/>
</dbReference>
<dbReference type="SUPFAM" id="SSF53901">
    <property type="entry name" value="Thiolase-like"/>
    <property type="match status" value="1"/>
</dbReference>
<dbReference type="PROSITE" id="PS50075">
    <property type="entry name" value="CARRIER"/>
    <property type="match status" value="2"/>
</dbReference>
<dbReference type="PROSITE" id="PS00606">
    <property type="entry name" value="KS3_1"/>
    <property type="match status" value="1"/>
</dbReference>
<dbReference type="PROSITE" id="PS52004">
    <property type="entry name" value="KS3_2"/>
    <property type="match status" value="1"/>
</dbReference>
<dbReference type="PROSITE" id="PS00012">
    <property type="entry name" value="PHOSPHOPANTETHEINE"/>
    <property type="match status" value="2"/>
</dbReference>
<dbReference type="PROSITE" id="PS52019">
    <property type="entry name" value="PKS_MFAS_DH"/>
    <property type="match status" value="1"/>
</dbReference>
<gene>
    <name evidence="1" type="primary">armB</name>
    <name type="ORF">ARMOST_10343</name>
</gene>
<proteinExistence type="evidence at protein level"/>
<accession>A0A284RE13</accession>
<comment type="function">
    <text evidence="1 3">Non-reducing polyketide synthase, part of the gene cluster that mediates the biosynthesis of melleolides, a range of antifungal and phytotoxic polyketide derivatives composed of an orsellinic acid (OA) moiety esterified to various sesquiterpene alcohols (By similarity). The first step in melleolides biosynthesis is performed by the delta(6)-protoilludene synthase PRO1 which catalyzes the cyclization of farnesyl diphosphate to protoilludene (By similarity). The orsellinic acid synthase armB produces OA by condensing acetyl-CoA with 3 malonyl-CoA units in a three-round chain elongation reaction folowed by a C2-C7 ring closure (By similarity). ArmB further catalyzes the trans-esterification of OA to the various sesquiterpene alcohols resulting from the hydroxylation of protoilludene (By similarity). The melleolides cluster also includes 5 cytochrome P450 monooxygenases, 4 NAD(+)-dependent oxidoreductases, one flavin-dependent oxidoreductase, and one O-methyltransferase (By similarity). The cytochrome P450 monooxygenases may be involved in protoilludene hydroxylation to elaborate melleolides with multiple alcohol groups, such as melleolide D, which carries alcohol functionalities at C-4, C-5, C-10, and C-13 (By similarity). The role of the NAD(+)-dependent enzymes remains unknown (By similarity). Numerous melleolides, including arnamial, show 5'-O-methylation of the aromatic moiety which may be catalyzed by the methyltransferase encoded in the cluster (By similarity). The flavin-dependent oxidoreductase might represent the dehydrogenase yielding the aldehyde in position 1 of arnamial and other melleolides (By similarity). Finally, several halogenase localized outside of the cluster (armH1 to armH5), are able to catalyze the transfer of a single chlorine atom to the melleolide backbone, resulting in a 6'-chloromelleolide product (By similarity).</text>
</comment>
<comment type="pathway">
    <text evidence="1">Secondary metabolite biosynthesis.</text>
</comment>
<comment type="domain">
    <text evidence="1">Multidomain protein; including a starter unit:ACP transacylase (SAT) that selects the starter unit; a ketosynthase (KS) that catalyzes repeated decarboxylative condensation to elongate the polyketide backbone; a malonyl-CoA:ACP transacylase (MAT) that selects and transfers the extender unit malonyl-CoA; a product template (PT) domain that controls the immediate cyclization regioselectivity of the reactive polyketide backbone; and an acyl-carrier protein (ACP) that serves as the tether of the growing and completed polyketide via its phosphopantetheinyl arm.</text>
</comment>
<comment type="domain">
    <text evidence="1">The release of the polyketide chain from the non-reducing polyketide synthase is mediated by the thioesterase (TE) domain localized at the C-ter of the protein, which accepts the sesquiterpene alcohols as substrate to offload the finished ketide from the PKS assembly line.</text>
</comment>
<comment type="biotechnology">
    <text evidence="9 10 11 12 13 14">Melleolide sesquiterpene aryl esters are cytotoxic secondary products with anti-cancer potential (PubMed:21376582, PubMed:26952552). Armillaridin shows therapeutic and radiosensitizing effects on human esophageal cancer cells (PubMed:23864890). Armillaridin induces autophagy-associated cell death in human chronic myelogenous leukemia as well as of hepatocellular carcinoma cells (PubMed:27592257, PubMed:31488037). Armillaridin can also inhibit the differentiation and activation of human macrophages and thus might have potential to be developed as a biological response modifier for inflammatory diseases (PubMed:25746621).</text>
</comment>
<comment type="miscellaneous">
    <text evidence="15 16 17">Armillaria species are both devastating forest pathogens and some of the largest and oldest terrestrial organisms on Earth (Probable) (PubMed:31746694). They forage for hosts and achieve immense colony sizes via rhizomorphs, root-like multicellular structures of clonal dispersal (Probable). An A.ostoyae colony, known as the 'humongous fungus' in the Malheur National Forest in the Strawberry Mountains of eastern Oregon, was found to be the largest fungal colony in the world, spanning an area of 9.1 square kilometers (Probable). This organism is estimated to be some 8,000 years old and may weigh as much as 35,000 tons (Probable).</text>
</comment>
<keyword id="KW-0596">Phosphopantetheine</keyword>
<keyword id="KW-0597">Phosphoprotein</keyword>
<keyword id="KW-1185">Reference proteome</keyword>
<keyword id="KW-0808">Transferase</keyword>
<keyword id="KW-0843">Virulence</keyword>